<gene>
    <name evidence="1" type="primary">xerC</name>
    <name type="ordered locus">RC1268</name>
</gene>
<keyword id="KW-0131">Cell cycle</keyword>
<keyword id="KW-0132">Cell division</keyword>
<keyword id="KW-0159">Chromosome partition</keyword>
<keyword id="KW-0963">Cytoplasm</keyword>
<keyword id="KW-0229">DNA integration</keyword>
<keyword id="KW-0233">DNA recombination</keyword>
<keyword id="KW-0238">DNA-binding</keyword>
<sequence length="305" mass="35353">MLDTSIQALINKWQKYLALQRNYSNHTVISYNNDLKHFLEFMNYYNSELVTINHIKTADIRLIRSWLAKRNCDNFTASSISRGLSAVKNFYRFLEKTTQLNSHIIFSIKSPKKTKLLPKALSEDDVVISLEHIEEYGNVKWVELRNKALLVLIYASGLRISEALSITKLHLQNLEFIRIIGKGSKERIIPWLPIAKNLITQYLEILPYKLGDNEPIFRGKQGKKLQPPVFNRELIKLKHFYGLPQHLTAHSFRHSFASHLLEHGADLRSLQELLGHKSLSTTQNYTKTSIKHLEAVYTTAYPIKK</sequence>
<protein>
    <recommendedName>
        <fullName evidence="1">Tyrosine recombinase XerC</fullName>
    </recommendedName>
</protein>
<accession>Q92G55</accession>
<dbReference type="EMBL" id="AE006914">
    <property type="protein sequence ID" value="AAL03806.1"/>
    <property type="molecule type" value="Genomic_DNA"/>
</dbReference>
<dbReference type="PIR" id="D97858">
    <property type="entry name" value="D97858"/>
</dbReference>
<dbReference type="RefSeq" id="WP_010977830.1">
    <property type="nucleotide sequence ID" value="NC_003103.1"/>
</dbReference>
<dbReference type="SMR" id="Q92G55"/>
<dbReference type="GeneID" id="928524"/>
<dbReference type="KEGG" id="rco:RC1268"/>
<dbReference type="PATRIC" id="fig|272944.4.peg.1455"/>
<dbReference type="HOGENOM" id="CLU_027562_9_0_5"/>
<dbReference type="Proteomes" id="UP000000816">
    <property type="component" value="Chromosome"/>
</dbReference>
<dbReference type="GO" id="GO:0005737">
    <property type="term" value="C:cytoplasm"/>
    <property type="evidence" value="ECO:0007669"/>
    <property type="project" value="UniProtKB-SubCell"/>
</dbReference>
<dbReference type="GO" id="GO:0003677">
    <property type="term" value="F:DNA binding"/>
    <property type="evidence" value="ECO:0007669"/>
    <property type="project" value="UniProtKB-KW"/>
</dbReference>
<dbReference type="GO" id="GO:0009037">
    <property type="term" value="F:tyrosine-based site-specific recombinase activity"/>
    <property type="evidence" value="ECO:0007669"/>
    <property type="project" value="UniProtKB-UniRule"/>
</dbReference>
<dbReference type="GO" id="GO:0051301">
    <property type="term" value="P:cell division"/>
    <property type="evidence" value="ECO:0007669"/>
    <property type="project" value="UniProtKB-KW"/>
</dbReference>
<dbReference type="GO" id="GO:0007059">
    <property type="term" value="P:chromosome segregation"/>
    <property type="evidence" value="ECO:0007669"/>
    <property type="project" value="UniProtKB-UniRule"/>
</dbReference>
<dbReference type="GO" id="GO:0006313">
    <property type="term" value="P:DNA transposition"/>
    <property type="evidence" value="ECO:0007669"/>
    <property type="project" value="UniProtKB-UniRule"/>
</dbReference>
<dbReference type="CDD" id="cd00798">
    <property type="entry name" value="INT_XerDC_C"/>
    <property type="match status" value="1"/>
</dbReference>
<dbReference type="Gene3D" id="1.10.150.130">
    <property type="match status" value="1"/>
</dbReference>
<dbReference type="Gene3D" id="1.10.443.10">
    <property type="entry name" value="Intergrase catalytic core"/>
    <property type="match status" value="1"/>
</dbReference>
<dbReference type="HAMAP" id="MF_01808">
    <property type="entry name" value="Recomb_XerC_XerD"/>
    <property type="match status" value="1"/>
</dbReference>
<dbReference type="InterPro" id="IPR044068">
    <property type="entry name" value="CB"/>
</dbReference>
<dbReference type="InterPro" id="IPR011010">
    <property type="entry name" value="DNA_brk_join_enz"/>
</dbReference>
<dbReference type="InterPro" id="IPR013762">
    <property type="entry name" value="Integrase-like_cat_sf"/>
</dbReference>
<dbReference type="InterPro" id="IPR002104">
    <property type="entry name" value="Integrase_catalytic"/>
</dbReference>
<dbReference type="InterPro" id="IPR010998">
    <property type="entry name" value="Integrase_recombinase_N"/>
</dbReference>
<dbReference type="InterPro" id="IPR004107">
    <property type="entry name" value="Integrase_SAM-like_N"/>
</dbReference>
<dbReference type="InterPro" id="IPR023009">
    <property type="entry name" value="Tyrosine_recombinase_XerC/XerD"/>
</dbReference>
<dbReference type="InterPro" id="IPR050090">
    <property type="entry name" value="Tyrosine_recombinase_XerCD"/>
</dbReference>
<dbReference type="PANTHER" id="PTHR30349">
    <property type="entry name" value="PHAGE INTEGRASE-RELATED"/>
    <property type="match status" value="1"/>
</dbReference>
<dbReference type="PANTHER" id="PTHR30349:SF90">
    <property type="entry name" value="TYROSINE RECOMBINASE XERD"/>
    <property type="match status" value="1"/>
</dbReference>
<dbReference type="Pfam" id="PF02899">
    <property type="entry name" value="Phage_int_SAM_1"/>
    <property type="match status" value="1"/>
</dbReference>
<dbReference type="Pfam" id="PF00589">
    <property type="entry name" value="Phage_integrase"/>
    <property type="match status" value="1"/>
</dbReference>
<dbReference type="SUPFAM" id="SSF56349">
    <property type="entry name" value="DNA breaking-rejoining enzymes"/>
    <property type="match status" value="1"/>
</dbReference>
<dbReference type="PROSITE" id="PS51900">
    <property type="entry name" value="CB"/>
    <property type="match status" value="1"/>
</dbReference>
<dbReference type="PROSITE" id="PS51898">
    <property type="entry name" value="TYR_RECOMBINASE"/>
    <property type="match status" value="1"/>
</dbReference>
<reference key="1">
    <citation type="journal article" date="2001" name="Science">
        <title>Mechanisms of evolution in Rickettsia conorii and R. prowazekii.</title>
        <authorList>
            <person name="Ogata H."/>
            <person name="Audic S."/>
            <person name="Renesto-Audiffren P."/>
            <person name="Fournier P.-E."/>
            <person name="Barbe V."/>
            <person name="Samson D."/>
            <person name="Roux V."/>
            <person name="Cossart P."/>
            <person name="Weissenbach J."/>
            <person name="Claverie J.-M."/>
            <person name="Raoult D."/>
        </authorList>
    </citation>
    <scope>NUCLEOTIDE SEQUENCE [LARGE SCALE GENOMIC DNA]</scope>
    <source>
        <strain>ATCC VR-613 / Malish 7</strain>
    </source>
</reference>
<organism>
    <name type="scientific">Rickettsia conorii (strain ATCC VR-613 / Malish 7)</name>
    <dbReference type="NCBI Taxonomy" id="272944"/>
    <lineage>
        <taxon>Bacteria</taxon>
        <taxon>Pseudomonadati</taxon>
        <taxon>Pseudomonadota</taxon>
        <taxon>Alphaproteobacteria</taxon>
        <taxon>Rickettsiales</taxon>
        <taxon>Rickettsiaceae</taxon>
        <taxon>Rickettsieae</taxon>
        <taxon>Rickettsia</taxon>
        <taxon>spotted fever group</taxon>
    </lineage>
</organism>
<evidence type="ECO:0000255" key="1">
    <source>
        <dbReference type="HAMAP-Rule" id="MF_01808"/>
    </source>
</evidence>
<evidence type="ECO:0000255" key="2">
    <source>
        <dbReference type="PROSITE-ProRule" id="PRU01246"/>
    </source>
</evidence>
<evidence type="ECO:0000255" key="3">
    <source>
        <dbReference type="PROSITE-ProRule" id="PRU01248"/>
    </source>
</evidence>
<feature type="chain" id="PRO_0000095322" description="Tyrosine recombinase XerC">
    <location>
        <begin position="1"/>
        <end position="305"/>
    </location>
</feature>
<feature type="domain" description="Core-binding (CB)" evidence="3">
    <location>
        <begin position="4"/>
        <end position="95"/>
    </location>
</feature>
<feature type="domain" description="Tyr recombinase" evidence="2">
    <location>
        <begin position="116"/>
        <end position="298"/>
    </location>
</feature>
<feature type="active site" evidence="1">
    <location>
        <position position="159"/>
    </location>
</feature>
<feature type="active site" evidence="1">
    <location>
        <position position="182"/>
    </location>
</feature>
<feature type="active site" evidence="1">
    <location>
        <position position="250"/>
    </location>
</feature>
<feature type="active site" evidence="1">
    <location>
        <position position="253"/>
    </location>
</feature>
<feature type="active site" evidence="1">
    <location>
        <position position="276"/>
    </location>
</feature>
<feature type="active site" description="O-(3'-phospho-DNA)-tyrosine intermediate" evidence="1">
    <location>
        <position position="285"/>
    </location>
</feature>
<proteinExistence type="inferred from homology"/>
<name>XERC_RICCN</name>
<comment type="function">
    <text evidence="1">Site-specific tyrosine recombinase, which acts by catalyzing the cutting and rejoining of the recombining DNA molecules. The XerC-XerD complex is essential to convert dimers of the bacterial chromosome into monomers to permit their segregation at cell division. It also contributes to the segregational stability of plasmids.</text>
</comment>
<comment type="subunit">
    <text evidence="1">Forms a cyclic heterotetrameric complex composed of two molecules of XerC and two molecules of XerD.</text>
</comment>
<comment type="subcellular location">
    <subcellularLocation>
        <location evidence="1">Cytoplasm</location>
    </subcellularLocation>
</comment>
<comment type="similarity">
    <text evidence="1">Belongs to the 'phage' integrase family. XerC subfamily.</text>
</comment>